<evidence type="ECO:0000255" key="1">
    <source>
        <dbReference type="HAMAP-Rule" id="MF_00097"/>
    </source>
</evidence>
<comment type="function">
    <text evidence="1">Condenses 4-methyl-5-(beta-hydroxyethyl)thiazole monophosphate (THZ-P) and 2-methyl-4-amino-5-hydroxymethyl pyrimidine pyrophosphate (HMP-PP) to form thiamine monophosphate (TMP).</text>
</comment>
<comment type="catalytic activity">
    <reaction evidence="1">
        <text>2-[(2R,5Z)-2-carboxy-4-methylthiazol-5(2H)-ylidene]ethyl phosphate + 4-amino-2-methyl-5-(diphosphooxymethyl)pyrimidine + 2 H(+) = thiamine phosphate + CO2 + diphosphate</text>
        <dbReference type="Rhea" id="RHEA:47844"/>
        <dbReference type="ChEBI" id="CHEBI:15378"/>
        <dbReference type="ChEBI" id="CHEBI:16526"/>
        <dbReference type="ChEBI" id="CHEBI:33019"/>
        <dbReference type="ChEBI" id="CHEBI:37575"/>
        <dbReference type="ChEBI" id="CHEBI:57841"/>
        <dbReference type="ChEBI" id="CHEBI:62899"/>
        <dbReference type="EC" id="2.5.1.3"/>
    </reaction>
</comment>
<comment type="catalytic activity">
    <reaction evidence="1">
        <text>2-(2-carboxy-4-methylthiazol-5-yl)ethyl phosphate + 4-amino-2-methyl-5-(diphosphooxymethyl)pyrimidine + 2 H(+) = thiamine phosphate + CO2 + diphosphate</text>
        <dbReference type="Rhea" id="RHEA:47848"/>
        <dbReference type="ChEBI" id="CHEBI:15378"/>
        <dbReference type="ChEBI" id="CHEBI:16526"/>
        <dbReference type="ChEBI" id="CHEBI:33019"/>
        <dbReference type="ChEBI" id="CHEBI:37575"/>
        <dbReference type="ChEBI" id="CHEBI:57841"/>
        <dbReference type="ChEBI" id="CHEBI:62890"/>
        <dbReference type="EC" id="2.5.1.3"/>
    </reaction>
</comment>
<comment type="catalytic activity">
    <reaction evidence="1">
        <text>4-methyl-5-(2-phosphooxyethyl)-thiazole + 4-amino-2-methyl-5-(diphosphooxymethyl)pyrimidine + H(+) = thiamine phosphate + diphosphate</text>
        <dbReference type="Rhea" id="RHEA:22328"/>
        <dbReference type="ChEBI" id="CHEBI:15378"/>
        <dbReference type="ChEBI" id="CHEBI:33019"/>
        <dbReference type="ChEBI" id="CHEBI:37575"/>
        <dbReference type="ChEBI" id="CHEBI:57841"/>
        <dbReference type="ChEBI" id="CHEBI:58296"/>
        <dbReference type="EC" id="2.5.1.3"/>
    </reaction>
</comment>
<comment type="cofactor">
    <cofactor evidence="1">
        <name>Mg(2+)</name>
        <dbReference type="ChEBI" id="CHEBI:18420"/>
    </cofactor>
    <text evidence="1">Binds 1 Mg(2+) ion per subunit.</text>
</comment>
<comment type="pathway">
    <text evidence="1">Cofactor biosynthesis; thiamine diphosphate biosynthesis; thiamine phosphate from 4-amino-2-methyl-5-diphosphomethylpyrimidine and 4-methyl-5-(2-phosphoethyl)-thiazole: step 1/1.</text>
</comment>
<comment type="similarity">
    <text evidence="1">Belongs to the thiamine-phosphate synthase family.</text>
</comment>
<keyword id="KW-0460">Magnesium</keyword>
<keyword id="KW-0479">Metal-binding</keyword>
<keyword id="KW-1185">Reference proteome</keyword>
<keyword id="KW-0784">Thiamine biosynthesis</keyword>
<keyword id="KW-0808">Transferase</keyword>
<feature type="chain" id="PRO_0000336382" description="Thiamine-phosphate synthase">
    <location>
        <begin position="1"/>
        <end position="205"/>
    </location>
</feature>
<feature type="binding site" evidence="1">
    <location>
        <begin position="37"/>
        <end position="41"/>
    </location>
    <ligand>
        <name>4-amino-2-methyl-5-(diphosphooxymethyl)pyrimidine</name>
        <dbReference type="ChEBI" id="CHEBI:57841"/>
    </ligand>
</feature>
<feature type="binding site" evidence="1">
    <location>
        <position position="69"/>
    </location>
    <ligand>
        <name>4-amino-2-methyl-5-(diphosphooxymethyl)pyrimidine</name>
        <dbReference type="ChEBI" id="CHEBI:57841"/>
    </ligand>
</feature>
<feature type="binding site" evidence="1">
    <location>
        <position position="70"/>
    </location>
    <ligand>
        <name>Mg(2+)</name>
        <dbReference type="ChEBI" id="CHEBI:18420"/>
    </ligand>
</feature>
<feature type="binding site" evidence="1">
    <location>
        <position position="89"/>
    </location>
    <ligand>
        <name>Mg(2+)</name>
        <dbReference type="ChEBI" id="CHEBI:18420"/>
    </ligand>
</feature>
<feature type="binding site" evidence="1">
    <location>
        <position position="108"/>
    </location>
    <ligand>
        <name>4-amino-2-methyl-5-(diphosphooxymethyl)pyrimidine</name>
        <dbReference type="ChEBI" id="CHEBI:57841"/>
    </ligand>
</feature>
<feature type="binding site" evidence="1">
    <location>
        <begin position="134"/>
        <end position="136"/>
    </location>
    <ligand>
        <name>2-[(2R,5Z)-2-carboxy-4-methylthiazol-5(2H)-ylidene]ethyl phosphate</name>
        <dbReference type="ChEBI" id="CHEBI:62899"/>
    </ligand>
</feature>
<feature type="binding site" evidence="1">
    <location>
        <position position="137"/>
    </location>
    <ligand>
        <name>4-amino-2-methyl-5-(diphosphooxymethyl)pyrimidine</name>
        <dbReference type="ChEBI" id="CHEBI:57841"/>
    </ligand>
</feature>
<feature type="binding site" evidence="1">
    <location>
        <position position="165"/>
    </location>
    <ligand>
        <name>2-[(2R,5Z)-2-carboxy-4-methylthiazol-5(2H)-ylidene]ethyl phosphate</name>
        <dbReference type="ChEBI" id="CHEBI:62899"/>
    </ligand>
</feature>
<feature type="binding site" evidence="1">
    <location>
        <begin position="185"/>
        <end position="186"/>
    </location>
    <ligand>
        <name>2-[(2R,5Z)-2-carboxy-4-methylthiazol-5(2H)-ylidene]ethyl phosphate</name>
        <dbReference type="ChEBI" id="CHEBI:62899"/>
    </ligand>
</feature>
<name>THIE_CLOBH</name>
<accession>A5HYZ3</accession>
<accession>A7G0Y9</accession>
<reference key="1">
    <citation type="journal article" date="2007" name="Genome Res.">
        <title>Genome sequence of a proteolytic (Group I) Clostridium botulinum strain Hall A and comparative analysis of the clostridial genomes.</title>
        <authorList>
            <person name="Sebaihia M."/>
            <person name="Peck M.W."/>
            <person name="Minton N.P."/>
            <person name="Thomson N.R."/>
            <person name="Holden M.T.G."/>
            <person name="Mitchell W.J."/>
            <person name="Carter A.T."/>
            <person name="Bentley S.D."/>
            <person name="Mason D.R."/>
            <person name="Crossman L."/>
            <person name="Paul C.J."/>
            <person name="Ivens A."/>
            <person name="Wells-Bennik M.H.J."/>
            <person name="Davis I.J."/>
            <person name="Cerdeno-Tarraga A.M."/>
            <person name="Churcher C."/>
            <person name="Quail M.A."/>
            <person name="Chillingworth T."/>
            <person name="Feltwell T."/>
            <person name="Fraser A."/>
            <person name="Goodhead I."/>
            <person name="Hance Z."/>
            <person name="Jagels K."/>
            <person name="Larke N."/>
            <person name="Maddison M."/>
            <person name="Moule S."/>
            <person name="Mungall K."/>
            <person name="Norbertczak H."/>
            <person name="Rabbinowitsch E."/>
            <person name="Sanders M."/>
            <person name="Simmonds M."/>
            <person name="White B."/>
            <person name="Whithead S."/>
            <person name="Parkhill J."/>
        </authorList>
    </citation>
    <scope>NUCLEOTIDE SEQUENCE [LARGE SCALE GENOMIC DNA]</scope>
    <source>
        <strain>Hall / ATCC 3502 / NCTC 13319 / Type A</strain>
    </source>
</reference>
<reference key="2">
    <citation type="journal article" date="2007" name="PLoS ONE">
        <title>Analysis of the neurotoxin complex genes in Clostridium botulinum A1-A4 and B1 strains: BoNT/A3, /Ba4 and /B1 clusters are located within plasmids.</title>
        <authorList>
            <person name="Smith T.J."/>
            <person name="Hill K.K."/>
            <person name="Foley B.T."/>
            <person name="Detter J.C."/>
            <person name="Munk A.C."/>
            <person name="Bruce D.C."/>
            <person name="Doggett N.A."/>
            <person name="Smith L.A."/>
            <person name="Marks J.D."/>
            <person name="Xie G."/>
            <person name="Brettin T.S."/>
        </authorList>
    </citation>
    <scope>NUCLEOTIDE SEQUENCE [LARGE SCALE GENOMIC DNA]</scope>
    <source>
        <strain>Hall / ATCC 3502 / NCTC 13319 / Type A</strain>
    </source>
</reference>
<dbReference type="EC" id="2.5.1.3" evidence="1"/>
<dbReference type="EMBL" id="CP000727">
    <property type="protein sequence ID" value="ABS39118.1"/>
    <property type="molecule type" value="Genomic_DNA"/>
</dbReference>
<dbReference type="EMBL" id="AM412317">
    <property type="protein sequence ID" value="CAL82002.1"/>
    <property type="molecule type" value="Genomic_DNA"/>
</dbReference>
<dbReference type="RefSeq" id="WP_011948211.1">
    <property type="nucleotide sequence ID" value="NC_009698.1"/>
</dbReference>
<dbReference type="RefSeq" id="YP_001252993.1">
    <property type="nucleotide sequence ID" value="NC_009495.1"/>
</dbReference>
<dbReference type="RefSeq" id="YP_001386408.1">
    <property type="nucleotide sequence ID" value="NC_009698.1"/>
</dbReference>
<dbReference type="SMR" id="A5HYZ3"/>
<dbReference type="GeneID" id="5184704"/>
<dbReference type="KEGG" id="cbh:CLC_0523"/>
<dbReference type="KEGG" id="cbo:CBO0449"/>
<dbReference type="PATRIC" id="fig|413999.7.peg.452"/>
<dbReference type="HOGENOM" id="CLU_018272_3_2_9"/>
<dbReference type="UniPathway" id="UPA00060">
    <property type="reaction ID" value="UER00141"/>
</dbReference>
<dbReference type="PRO" id="PR:A5HYZ3"/>
<dbReference type="Proteomes" id="UP000001986">
    <property type="component" value="Chromosome"/>
</dbReference>
<dbReference type="GO" id="GO:0005829">
    <property type="term" value="C:cytosol"/>
    <property type="evidence" value="ECO:0000318"/>
    <property type="project" value="GO_Central"/>
</dbReference>
<dbReference type="GO" id="GO:0008902">
    <property type="term" value="F:hydroxymethylpyrimidine kinase activity"/>
    <property type="evidence" value="ECO:0000318"/>
    <property type="project" value="GO_Central"/>
</dbReference>
<dbReference type="GO" id="GO:0000287">
    <property type="term" value="F:magnesium ion binding"/>
    <property type="evidence" value="ECO:0007669"/>
    <property type="project" value="UniProtKB-UniRule"/>
</dbReference>
<dbReference type="GO" id="GO:0008972">
    <property type="term" value="F:phosphomethylpyrimidine kinase activity"/>
    <property type="evidence" value="ECO:0000318"/>
    <property type="project" value="GO_Central"/>
</dbReference>
<dbReference type="GO" id="GO:0004789">
    <property type="term" value="F:thiamine-phosphate diphosphorylase activity"/>
    <property type="evidence" value="ECO:0007669"/>
    <property type="project" value="UniProtKB-UniRule"/>
</dbReference>
<dbReference type="GO" id="GO:0009228">
    <property type="term" value="P:thiamine biosynthetic process"/>
    <property type="evidence" value="ECO:0000318"/>
    <property type="project" value="GO_Central"/>
</dbReference>
<dbReference type="GO" id="GO:0009229">
    <property type="term" value="P:thiamine diphosphate biosynthetic process"/>
    <property type="evidence" value="ECO:0007669"/>
    <property type="project" value="UniProtKB-UniRule"/>
</dbReference>
<dbReference type="CDD" id="cd00564">
    <property type="entry name" value="TMP_TenI"/>
    <property type="match status" value="1"/>
</dbReference>
<dbReference type="FunFam" id="3.20.20.70:FF:000282">
    <property type="entry name" value="Thiamine-phosphate synthase"/>
    <property type="match status" value="1"/>
</dbReference>
<dbReference type="Gene3D" id="3.20.20.70">
    <property type="entry name" value="Aldolase class I"/>
    <property type="match status" value="1"/>
</dbReference>
<dbReference type="HAMAP" id="MF_00097">
    <property type="entry name" value="TMP_synthase"/>
    <property type="match status" value="1"/>
</dbReference>
<dbReference type="InterPro" id="IPR013785">
    <property type="entry name" value="Aldolase_TIM"/>
</dbReference>
<dbReference type="InterPro" id="IPR036206">
    <property type="entry name" value="ThiamineP_synth_sf"/>
</dbReference>
<dbReference type="InterPro" id="IPR022998">
    <property type="entry name" value="ThiamineP_synth_TenI"/>
</dbReference>
<dbReference type="InterPro" id="IPR034291">
    <property type="entry name" value="TMP_synthase"/>
</dbReference>
<dbReference type="NCBIfam" id="TIGR00693">
    <property type="entry name" value="thiE"/>
    <property type="match status" value="1"/>
</dbReference>
<dbReference type="PANTHER" id="PTHR20857:SF23">
    <property type="entry name" value="THIAMINE BIOSYNTHETIC BIFUNCTIONAL ENZYME"/>
    <property type="match status" value="1"/>
</dbReference>
<dbReference type="PANTHER" id="PTHR20857">
    <property type="entry name" value="THIAMINE-PHOSPHATE PYROPHOSPHORYLASE"/>
    <property type="match status" value="1"/>
</dbReference>
<dbReference type="Pfam" id="PF02581">
    <property type="entry name" value="TMP-TENI"/>
    <property type="match status" value="1"/>
</dbReference>
<dbReference type="SUPFAM" id="SSF51391">
    <property type="entry name" value="Thiamin phosphate synthase"/>
    <property type="match status" value="1"/>
</dbReference>
<proteinExistence type="inferred from homology"/>
<organism>
    <name type="scientific">Clostridium botulinum (strain Hall / ATCC 3502 / NCTC 13319 / Type A)</name>
    <dbReference type="NCBI Taxonomy" id="441771"/>
    <lineage>
        <taxon>Bacteria</taxon>
        <taxon>Bacillati</taxon>
        <taxon>Bacillota</taxon>
        <taxon>Clostridia</taxon>
        <taxon>Eubacteriales</taxon>
        <taxon>Clostridiaceae</taxon>
        <taxon>Clostridium</taxon>
    </lineage>
</organism>
<sequence>MEINYELYLITDRRFLKGRQLKKVVEDAILGGVTIVQVREKDVSTREFYNVAKEVKEVTDYYKVPIIINDRLDIAQAIDASGVHLGQKDMHLNIAREILGKDKIIGISVGNVKEALQAQNNGADYLGIGTIFPTGSKKDVDAIIGIDGLSKIKDSISIPSVAIGGINKTNFKDVLKTGIEGISVISAILDEDDIKLAANNLLINK</sequence>
<protein>
    <recommendedName>
        <fullName evidence="1">Thiamine-phosphate synthase</fullName>
        <shortName evidence="1">TP synthase</shortName>
        <shortName evidence="1">TPS</shortName>
        <ecNumber evidence="1">2.5.1.3</ecNumber>
    </recommendedName>
    <alternativeName>
        <fullName evidence="1">Thiamine-phosphate pyrophosphorylase</fullName>
        <shortName evidence="1">TMP pyrophosphorylase</shortName>
        <shortName evidence="1">TMP-PPase</shortName>
    </alternativeName>
</protein>
<gene>
    <name evidence="1" type="primary">thiE</name>
    <name type="ordered locus">CBO0449</name>
    <name type="ordered locus">CLC_0523</name>
</gene>